<comment type="function">
    <text evidence="1 4">Nuclear GTPase found in germinal center B-cells, where it may inhibit function of the activation-induced cytidine deaminase AICDA (By similarity). Reduces somatic hypermutation in B-cells which may enhance genome stability (PubMed:22833677).</text>
</comment>
<comment type="subcellular location">
    <subcellularLocation>
        <location evidence="4">Nucleus speckle</location>
    </subcellularLocation>
</comment>
<comment type="disruption phenotype">
    <text evidence="4">B-cell and T-cell development is unaffected, and germinal centers form normally. Class-switch recombination in B-cells is not affected. B-cells in older mice (3 months onwards) show significantly increased somatic hypermutation near the immunoglobulin heavy chain locus, mainly at G:C base pairs. Other loci also show increased rates of somatic hypermutation.</text>
</comment>
<proteinExistence type="inferred from homology"/>
<protein>
    <recommendedName>
        <fullName evidence="1">Nuclear GTPase SLIP-GC</fullName>
        <ecNumber evidence="5">3.6.1.-</ecNumber>
    </recommendedName>
    <alternativeName>
        <fullName evidence="1">Speckled-like pattern in the germinal center</fullName>
    </alternativeName>
</protein>
<evidence type="ECO:0000250" key="1">
    <source>
        <dbReference type="UniProtKB" id="Q68CJ6"/>
    </source>
</evidence>
<evidence type="ECO:0000255" key="2"/>
<evidence type="ECO:0000255" key="3">
    <source>
        <dbReference type="PROSITE-ProRule" id="PRU00499"/>
    </source>
</evidence>
<evidence type="ECO:0000269" key="4">
    <source>
    </source>
</evidence>
<evidence type="ECO:0000305" key="5"/>
<evidence type="ECO:0000312" key="6">
    <source>
        <dbReference type="MGI" id="MGI:2685446"/>
    </source>
</evidence>
<evidence type="ECO:0000312" key="7">
    <source>
        <dbReference type="Proteomes" id="UP000000589"/>
    </source>
</evidence>
<name>SLIP_MOUSE</name>
<accession>D3YWJ0</accession>
<gene>
    <name evidence="6" type="primary">Nuggc</name>
</gene>
<dbReference type="EC" id="3.6.1.-" evidence="5"/>
<dbReference type="EMBL" id="AC122274">
    <property type="status" value="NOT_ANNOTATED_CDS"/>
    <property type="molecule type" value="Genomic_DNA"/>
</dbReference>
<dbReference type="RefSeq" id="XP_006518364.1">
    <property type="nucleotide sequence ID" value="XM_006518301.3"/>
</dbReference>
<dbReference type="RefSeq" id="XP_006518365.1">
    <property type="nucleotide sequence ID" value="XM_006518302.1"/>
</dbReference>
<dbReference type="RefSeq" id="XP_006518366.1">
    <property type="nucleotide sequence ID" value="XM_006518303.3"/>
</dbReference>
<dbReference type="FunCoup" id="D3YWJ0">
    <property type="interactions" value="687"/>
</dbReference>
<dbReference type="STRING" id="10090.ENSMUSP00000078434"/>
<dbReference type="iPTMnet" id="D3YWJ0"/>
<dbReference type="PhosphoSitePlus" id="D3YWJ0"/>
<dbReference type="jPOST" id="D3YWJ0"/>
<dbReference type="PaxDb" id="10090-ENSMUSP00000078434"/>
<dbReference type="PeptideAtlas" id="D3YWJ0"/>
<dbReference type="ProteomicsDB" id="258696"/>
<dbReference type="Pumba" id="D3YWJ0"/>
<dbReference type="Antibodypedia" id="5386">
    <property type="antibodies" value="29 antibodies from 13 providers"/>
</dbReference>
<dbReference type="Ensembl" id="ENSMUST00000150897.8">
    <property type="protein sequence ID" value="ENSMUSP00000118402.2"/>
    <property type="gene ID" value="ENSMUSG00000061356.14"/>
</dbReference>
<dbReference type="GeneID" id="100503545"/>
<dbReference type="AGR" id="MGI:2685446"/>
<dbReference type="CTD" id="389643"/>
<dbReference type="MGI" id="MGI:2685446">
    <property type="gene designation" value="Nuggc"/>
</dbReference>
<dbReference type="VEuPathDB" id="HostDB:ENSMUSG00000061356"/>
<dbReference type="eggNOG" id="ENOG502QVUX">
    <property type="taxonomic scope" value="Eukaryota"/>
</dbReference>
<dbReference type="GeneTree" id="ENSGT00390000007091"/>
<dbReference type="HOGENOM" id="CLU_019456_0_0_1"/>
<dbReference type="InParanoid" id="D3YWJ0"/>
<dbReference type="OrthoDB" id="3598281at2759"/>
<dbReference type="PhylomeDB" id="D3YWJ0"/>
<dbReference type="BioGRID-ORCS" id="100503545">
    <property type="hits" value="3 hits in 113 CRISPR screens"/>
</dbReference>
<dbReference type="ChiTaRS" id="Nuggc">
    <property type="organism name" value="mouse"/>
</dbReference>
<dbReference type="PRO" id="PR:D3YWJ0"/>
<dbReference type="Proteomes" id="UP000000589">
    <property type="component" value="Chromosome 14"/>
</dbReference>
<dbReference type="RNAct" id="D3YWJ0">
    <property type="molecule type" value="protein"/>
</dbReference>
<dbReference type="Bgee" id="ENSMUSG00000061356">
    <property type="expression patterns" value="Expressed in spermatocyte and 14 other cell types or tissues"/>
</dbReference>
<dbReference type="ExpressionAtlas" id="D3YWJ0">
    <property type="expression patterns" value="baseline and differential"/>
</dbReference>
<dbReference type="GO" id="GO:0016607">
    <property type="term" value="C:nuclear speck"/>
    <property type="evidence" value="ECO:0007669"/>
    <property type="project" value="UniProtKB-SubCell"/>
</dbReference>
<dbReference type="GO" id="GO:0005634">
    <property type="term" value="C:nucleus"/>
    <property type="evidence" value="ECO:0000314"/>
    <property type="project" value="MGI"/>
</dbReference>
<dbReference type="GO" id="GO:0005525">
    <property type="term" value="F:GTP binding"/>
    <property type="evidence" value="ECO:0007669"/>
    <property type="project" value="UniProtKB-KW"/>
</dbReference>
<dbReference type="GO" id="GO:0016787">
    <property type="term" value="F:hydrolase activity"/>
    <property type="evidence" value="ECO:0007669"/>
    <property type="project" value="UniProtKB-KW"/>
</dbReference>
<dbReference type="GO" id="GO:0006974">
    <property type="term" value="P:DNA damage response"/>
    <property type="evidence" value="ECO:0000315"/>
    <property type="project" value="MGI"/>
</dbReference>
<dbReference type="GO" id="GO:0016446">
    <property type="term" value="P:somatic hypermutation of immunoglobulin genes"/>
    <property type="evidence" value="ECO:0000315"/>
    <property type="project" value="MGI"/>
</dbReference>
<dbReference type="CDD" id="cd00882">
    <property type="entry name" value="Ras_like_GTPase"/>
    <property type="match status" value="1"/>
</dbReference>
<dbReference type="FunFam" id="3.40.50.300:FF:001353">
    <property type="entry name" value="Nuclear GTPase, germinal center associated"/>
    <property type="match status" value="1"/>
</dbReference>
<dbReference type="FunFam" id="3.40.50.300:FF:001102">
    <property type="entry name" value="Nuclear GTPase, germinal center-associated"/>
    <property type="match status" value="1"/>
</dbReference>
<dbReference type="Gene3D" id="3.40.50.300">
    <property type="entry name" value="P-loop containing nucleotide triphosphate hydrolases"/>
    <property type="match status" value="1"/>
</dbReference>
<dbReference type="InterPro" id="IPR045063">
    <property type="entry name" value="Dynamin_N"/>
</dbReference>
<dbReference type="InterPro" id="IPR053082">
    <property type="entry name" value="Nuclear_GTPase_SLIP-GC"/>
</dbReference>
<dbReference type="InterPro" id="IPR027417">
    <property type="entry name" value="P-loop_NTPase"/>
</dbReference>
<dbReference type="PANTHER" id="PTHR47308">
    <property type="entry name" value="NUCLEAR GTPASE SLIP-GC"/>
    <property type="match status" value="1"/>
</dbReference>
<dbReference type="PANTHER" id="PTHR47308:SF1">
    <property type="entry name" value="NUCLEAR GTPASE SLIP-GC"/>
    <property type="match status" value="1"/>
</dbReference>
<dbReference type="Pfam" id="PF00350">
    <property type="entry name" value="Dynamin_N"/>
    <property type="match status" value="1"/>
</dbReference>
<dbReference type="SUPFAM" id="SSF52540">
    <property type="entry name" value="P-loop containing nucleoside triphosphate hydrolases"/>
    <property type="match status" value="1"/>
</dbReference>
<sequence length="796" mass="91269">MEEMEALVGVVPHSADCDLFKEPVRKRRRLHRDRQFQAFPSAEQSALKEYEKLECRTRRVLSNTYQKLIQSVFLDDSIPSGLKYLINRLLALIEKSPLEPVYVGFLGITGAGKSSLINALIRQAMFLPVSGESVCTSCIVQVSSGCCEQYEAKIHLLSDQEWKAELKDLTKLLHRAEQSGEEEADLWDRDDATEEAAQKLRMLYGHGAERRHYEELLRLKPRGRIPNSRTITLKAEEAGELSVKLDPYIRTRRRDWDGESAETQIWPLIKYVEVILPKSALIPEGVVLVDIPGTGDFNSKRDKMWKKTIDKCSVIWVISDIERVSGGKTHEDLLSESIKACQRGFCRDIALVVTKTDKLHLQEYLRERKMGNQAIQSQREAVLQRNEIIKLQRKRMLKEKLKRKLPADSKVLEASDLVYTVSAHEYWQRTILTEEESEIPKLREYIRKRILDKKRRLVTKYVTEAFGLLLLTDTLNTEESLLTEELNTGGLRQFVEEKMELLEKAIEQCFARMEQPLQTGVQVAMTSYRRILGSCLVRSRGNQGFHQTLKAVCLKNGVYASRTLARIDLNEALSQPIYDQIDPVFGGIFRDGKPTAPALMQHIDAFKHSLEERMAEVGVRSGWKQDGYKRSFLIQEISAILGGLESHILRRKRKIYKSVTSSIQNDLKPCYEEAAQITGKKACERMKDVIRRGVERQVAEGLFERAQERMWHQFRQLKHGITEKVKGSITTMLTLAAPQGVGLCKELADVRNEQKEMEKLYRSLREVAENAQLRRSMQDFLLRMSPSKAGPHGTKL</sequence>
<reference evidence="7" key="1">
    <citation type="journal article" date="2009" name="PLoS Biol.">
        <title>Lineage-specific biology revealed by a finished genome assembly of the mouse.</title>
        <authorList>
            <person name="Church D.M."/>
            <person name="Goodstadt L."/>
            <person name="Hillier L.W."/>
            <person name="Zody M.C."/>
            <person name="Goldstein S."/>
            <person name="She X."/>
            <person name="Bult C.J."/>
            <person name="Agarwala R."/>
            <person name="Cherry J.L."/>
            <person name="DiCuccio M."/>
            <person name="Hlavina W."/>
            <person name="Kapustin Y."/>
            <person name="Meric P."/>
            <person name="Maglott D."/>
            <person name="Birtle Z."/>
            <person name="Marques A.C."/>
            <person name="Graves T."/>
            <person name="Zhou S."/>
            <person name="Teague B."/>
            <person name="Potamousis K."/>
            <person name="Churas C."/>
            <person name="Place M."/>
            <person name="Herschleb J."/>
            <person name="Runnheim R."/>
            <person name="Forrest D."/>
            <person name="Amos-Landgraf J."/>
            <person name="Schwartz D.C."/>
            <person name="Cheng Z."/>
            <person name="Lindblad-Toh K."/>
            <person name="Eichler E.E."/>
            <person name="Ponting C.P."/>
        </authorList>
    </citation>
    <scope>NUCLEOTIDE SEQUENCE [LARGE SCALE GENOMIC DNA]</scope>
    <source>
        <strain evidence="7">C57BL/6J</strain>
    </source>
</reference>
<reference evidence="5" key="2">
    <citation type="journal article" date="2012" name="J. Biol. Chem.">
        <title>Altered pattern of immunoglobulin hypermutation in mice deficient in Slip-GC protein.</title>
        <authorList>
            <person name="Richter K."/>
            <person name="Burch L."/>
            <person name="Chao F."/>
            <person name="Henke D."/>
            <person name="Jiang C."/>
            <person name="Daly J."/>
            <person name="Zhao M.L."/>
            <person name="Kissling G."/>
            <person name="Diaz M."/>
        </authorList>
    </citation>
    <scope>FUNCTION</scope>
    <scope>SUBCELLULAR LOCATION</scope>
    <scope>DISRUPTION PHENOTYPE</scope>
</reference>
<keyword id="KW-0175">Coiled coil</keyword>
<keyword id="KW-0342">GTP-binding</keyword>
<keyword id="KW-0378">Hydrolase</keyword>
<keyword id="KW-0547">Nucleotide-binding</keyword>
<keyword id="KW-0539">Nucleus</keyword>
<keyword id="KW-1185">Reference proteome</keyword>
<organism evidence="7">
    <name type="scientific">Mus musculus</name>
    <name type="common">Mouse</name>
    <dbReference type="NCBI Taxonomy" id="10090"/>
    <lineage>
        <taxon>Eukaryota</taxon>
        <taxon>Metazoa</taxon>
        <taxon>Chordata</taxon>
        <taxon>Craniata</taxon>
        <taxon>Vertebrata</taxon>
        <taxon>Euteleostomi</taxon>
        <taxon>Mammalia</taxon>
        <taxon>Eutheria</taxon>
        <taxon>Euarchontoglires</taxon>
        <taxon>Glires</taxon>
        <taxon>Rodentia</taxon>
        <taxon>Myomorpha</taxon>
        <taxon>Muroidea</taxon>
        <taxon>Muridae</taxon>
        <taxon>Murinae</taxon>
        <taxon>Mus</taxon>
        <taxon>Mus</taxon>
    </lineage>
</organism>
<feature type="chain" id="PRO_0000436145" description="Nuclear GTPase SLIP-GC">
    <location>
        <begin position="1"/>
        <end position="796"/>
    </location>
</feature>
<feature type="coiled-coil region" evidence="2">
    <location>
        <begin position="158"/>
        <end position="185"/>
    </location>
</feature>
<feature type="coiled-coil region" evidence="2">
    <location>
        <begin position="742"/>
        <end position="776"/>
    </location>
</feature>
<feature type="binding site" evidence="3">
    <location>
        <begin position="107"/>
        <end position="114"/>
    </location>
    <ligand>
        <name>GTP</name>
        <dbReference type="ChEBI" id="CHEBI:37565"/>
    </ligand>
</feature>